<dbReference type="EMBL" id="BT082376">
    <property type="protein sequence ID" value="ACQ58083.1"/>
    <property type="molecule type" value="mRNA"/>
</dbReference>
<dbReference type="RefSeq" id="XP_054468442.1">
    <property type="nucleotide sequence ID" value="XM_054612467.1"/>
</dbReference>
<dbReference type="SMR" id="C3KHG1"/>
<dbReference type="GeneID" id="129102354"/>
<dbReference type="OrthoDB" id="10062823at2759"/>
<dbReference type="InterPro" id="IPR026776">
    <property type="entry name" value="UPF0729_C18orf32-like"/>
</dbReference>
<dbReference type="PANTHER" id="PTHR13456">
    <property type="entry name" value="UPF0729 PROTEIN C18ORF32"/>
    <property type="match status" value="1"/>
</dbReference>
<dbReference type="PANTHER" id="PTHR13456:SF0">
    <property type="entry name" value="UPF0729 PROTEIN C18ORF32"/>
    <property type="match status" value="1"/>
</dbReference>
<dbReference type="Pfam" id="PF14975">
    <property type="entry name" value="DUF4512"/>
    <property type="match status" value="1"/>
</dbReference>
<proteinExistence type="inferred from homology"/>
<reference key="1">
    <citation type="submission" date="2009-05" db="EMBL/GenBank/DDBJ databases">
        <title>Anoplopoma fimbria ESTs and full-length cDNAs.</title>
        <authorList>
            <person name="Messmer A."/>
            <person name="Rondeau E."/>
            <person name="Sanderson D."/>
            <person name="Cooper G.A."/>
            <person name="Leong J."/>
            <person name="Koop B.F."/>
        </authorList>
    </citation>
    <scope>NUCLEOTIDE SEQUENCE [LARGE SCALE MRNA]</scope>
    <source>
        <tissue>Brain</tissue>
    </source>
</reference>
<evidence type="ECO:0000256" key="1">
    <source>
        <dbReference type="SAM" id="MobiDB-lite"/>
    </source>
</evidence>
<evidence type="ECO:0000305" key="2"/>
<name>CR032_ANOFI</name>
<comment type="similarity">
    <text evidence="2">Belongs to the UPF0729 family.</text>
</comment>
<organism>
    <name type="scientific">Anoplopoma fimbria</name>
    <name type="common">Sablefish</name>
    <dbReference type="NCBI Taxonomy" id="229290"/>
    <lineage>
        <taxon>Eukaryota</taxon>
        <taxon>Metazoa</taxon>
        <taxon>Chordata</taxon>
        <taxon>Craniata</taxon>
        <taxon>Vertebrata</taxon>
        <taxon>Euteleostomi</taxon>
        <taxon>Actinopterygii</taxon>
        <taxon>Neopterygii</taxon>
        <taxon>Teleostei</taxon>
        <taxon>Neoteleostei</taxon>
        <taxon>Acanthomorphata</taxon>
        <taxon>Eupercaria</taxon>
        <taxon>Perciformes</taxon>
        <taxon>Cottioidei</taxon>
        <taxon>Anoplopomatales</taxon>
        <taxon>Anoplopomatidae</taxon>
        <taxon>Anoplopoma</taxon>
    </lineage>
</organism>
<feature type="chain" id="PRO_0000390357" description="UPF0729 protein C18orf32 homolog">
    <location>
        <begin position="1"/>
        <end position="81"/>
    </location>
</feature>
<feature type="region of interest" description="Disordered" evidence="1">
    <location>
        <begin position="45"/>
        <end position="81"/>
    </location>
</feature>
<feature type="compositionally biased region" description="Polar residues" evidence="1">
    <location>
        <begin position="45"/>
        <end position="58"/>
    </location>
</feature>
<accession>C3KHG1</accession>
<protein>
    <recommendedName>
        <fullName>UPF0729 protein C18orf32 homolog</fullName>
    </recommendedName>
</protein>
<sequence length="81" mass="8932">MVCIPCIVIPLLLWVYKRFLEPFLYPIISPIINTFWTKKAVQETAASDQKVSEKSNGTCKPESNGEATANGSTIAADKKTD</sequence>